<evidence type="ECO:0000255" key="1">
    <source>
        <dbReference type="HAMAP-Rule" id="MF_00181"/>
    </source>
</evidence>
<reference key="1">
    <citation type="journal article" date="2009" name="J. Bacteriol.">
        <title>Complete genome sequence of Haemophilus parasuis SH0165.</title>
        <authorList>
            <person name="Yue M."/>
            <person name="Yang F."/>
            <person name="Yang J."/>
            <person name="Bei W."/>
            <person name="Cai X."/>
            <person name="Chen L."/>
            <person name="Dong J."/>
            <person name="Zhou R."/>
            <person name="Jin M."/>
            <person name="Jin Q."/>
            <person name="Chen H."/>
        </authorList>
    </citation>
    <scope>NUCLEOTIDE SEQUENCE [LARGE SCALE GENOMIC DNA]</scope>
    <source>
        <strain>SH0165</strain>
    </source>
</reference>
<proteinExistence type="inferred from homology"/>
<sequence length="498" mass="53975">MEFSVKNGSVEKQRTGCLVVGVYEPRRLSPAAEQLDKLSDGYLSNLLRKGDLEGRVGQTLLLHNVPNVPADRVLLVGCGKERELTERQYKQTIQKMVQVINDTGSTEAICFLTELHVKARSVYWNIRFAIEAIQENGYQYNEFKSVKPEIRRELRKIVFNIANRKDLTVSEQAVEQGKAVALGVIAAKNVANCPPNVCNPKYLSGLAKGLAKEYDNITTTVLDEKEMAALQMNAYLAVSRGSENDAYLSIIEYKGSPNPAAKPIVLVGKGLTFDTGGISIKPSDAMDEMKYDMGGAASVYGTMKAIAEMKLPLNVIGVLAGCENMPDGNAYRPGDILTTMSGLTVEVLNTDAEGRLVLCDTLTYVERFDPELVIDVATLTGACMIALGNHNSGLISPNNTLANDLLNAAEQADDKAWRLPMGEEYQEQLKSNFADLANIGGRLGGAITAGVFLSNFTKKYTWAHLDIAGTAWKSGAAKGATGRPVPLLSQFLINKAGV</sequence>
<comment type="function">
    <text evidence="1">Presumably involved in the processing and regular turnover of intracellular proteins. Catalyzes the removal of unsubstituted N-terminal amino acids from various peptides.</text>
</comment>
<comment type="catalytic activity">
    <reaction evidence="1">
        <text>Release of an N-terminal amino acid, Xaa-|-Yaa-, in which Xaa is preferably Leu, but may be other amino acids including Pro although not Arg or Lys, and Yaa may be Pro. Amino acid amides and methyl esters are also readily hydrolyzed, but rates on arylamides are exceedingly low.</text>
        <dbReference type="EC" id="3.4.11.1"/>
    </reaction>
</comment>
<comment type="catalytic activity">
    <reaction evidence="1">
        <text>Release of an N-terminal amino acid, preferentially leucine, but not glutamic or aspartic acids.</text>
        <dbReference type="EC" id="3.4.11.10"/>
    </reaction>
</comment>
<comment type="cofactor">
    <cofactor evidence="1">
        <name>Mn(2+)</name>
        <dbReference type="ChEBI" id="CHEBI:29035"/>
    </cofactor>
    <text evidence="1">Binds 2 manganese ions per subunit.</text>
</comment>
<comment type="subcellular location">
    <subcellularLocation>
        <location evidence="1">Cytoplasm</location>
    </subcellularLocation>
</comment>
<comment type="similarity">
    <text evidence="1">Belongs to the peptidase M17 family.</text>
</comment>
<feature type="chain" id="PRO_1000192715" description="Probable cytosol aminopeptidase">
    <location>
        <begin position="1"/>
        <end position="498"/>
    </location>
</feature>
<feature type="active site" evidence="1">
    <location>
        <position position="281"/>
    </location>
</feature>
<feature type="active site" evidence="1">
    <location>
        <position position="355"/>
    </location>
</feature>
<feature type="binding site" evidence="1">
    <location>
        <position position="269"/>
    </location>
    <ligand>
        <name>Mn(2+)</name>
        <dbReference type="ChEBI" id="CHEBI:29035"/>
        <label>2</label>
    </ligand>
</feature>
<feature type="binding site" evidence="1">
    <location>
        <position position="274"/>
    </location>
    <ligand>
        <name>Mn(2+)</name>
        <dbReference type="ChEBI" id="CHEBI:29035"/>
        <label>1</label>
    </ligand>
</feature>
<feature type="binding site" evidence="1">
    <location>
        <position position="274"/>
    </location>
    <ligand>
        <name>Mn(2+)</name>
        <dbReference type="ChEBI" id="CHEBI:29035"/>
        <label>2</label>
    </ligand>
</feature>
<feature type="binding site" evidence="1">
    <location>
        <position position="292"/>
    </location>
    <ligand>
        <name>Mn(2+)</name>
        <dbReference type="ChEBI" id="CHEBI:29035"/>
        <label>2</label>
    </ligand>
</feature>
<feature type="binding site" evidence="1">
    <location>
        <position position="351"/>
    </location>
    <ligand>
        <name>Mn(2+)</name>
        <dbReference type="ChEBI" id="CHEBI:29035"/>
        <label>1</label>
    </ligand>
</feature>
<feature type="binding site" evidence="1">
    <location>
        <position position="353"/>
    </location>
    <ligand>
        <name>Mn(2+)</name>
        <dbReference type="ChEBI" id="CHEBI:29035"/>
        <label>1</label>
    </ligand>
</feature>
<feature type="binding site" evidence="1">
    <location>
        <position position="353"/>
    </location>
    <ligand>
        <name>Mn(2+)</name>
        <dbReference type="ChEBI" id="CHEBI:29035"/>
        <label>2</label>
    </ligand>
</feature>
<gene>
    <name evidence="1" type="primary">pepA</name>
    <name type="ordered locus">HAPS_1419</name>
</gene>
<organism>
    <name type="scientific">Glaesserella parasuis serovar 5 (strain SH0165)</name>
    <name type="common">Haemophilus parasuis</name>
    <dbReference type="NCBI Taxonomy" id="557723"/>
    <lineage>
        <taxon>Bacteria</taxon>
        <taxon>Pseudomonadati</taxon>
        <taxon>Pseudomonadota</taxon>
        <taxon>Gammaproteobacteria</taxon>
        <taxon>Pasteurellales</taxon>
        <taxon>Pasteurellaceae</taxon>
        <taxon>Glaesserella</taxon>
    </lineage>
</organism>
<protein>
    <recommendedName>
        <fullName evidence="1">Probable cytosol aminopeptidase</fullName>
        <ecNumber evidence="1">3.4.11.1</ecNumber>
    </recommendedName>
    <alternativeName>
        <fullName evidence="1">Leucine aminopeptidase</fullName>
        <shortName evidence="1">LAP</shortName>
        <ecNumber evidence="1">3.4.11.10</ecNumber>
    </alternativeName>
    <alternativeName>
        <fullName evidence="1">Leucyl aminopeptidase</fullName>
    </alternativeName>
</protein>
<name>AMPA_GLAP5</name>
<dbReference type="EC" id="3.4.11.1" evidence="1"/>
<dbReference type="EC" id="3.4.11.10" evidence="1"/>
<dbReference type="EMBL" id="CP001321">
    <property type="protein sequence ID" value="ACL32991.1"/>
    <property type="molecule type" value="Genomic_DNA"/>
</dbReference>
<dbReference type="RefSeq" id="WP_015939773.1">
    <property type="nucleotide sequence ID" value="NC_011852.1"/>
</dbReference>
<dbReference type="SMR" id="B8F6N9"/>
<dbReference type="STRING" id="557723.HAPS_1419"/>
<dbReference type="MEROPS" id="M17.003"/>
<dbReference type="KEGG" id="hap:HAPS_1419"/>
<dbReference type="PATRIC" id="fig|557723.8.peg.1385"/>
<dbReference type="HOGENOM" id="CLU_013734_0_1_6"/>
<dbReference type="Proteomes" id="UP000006743">
    <property type="component" value="Chromosome"/>
</dbReference>
<dbReference type="GO" id="GO:0005737">
    <property type="term" value="C:cytoplasm"/>
    <property type="evidence" value="ECO:0007669"/>
    <property type="project" value="UniProtKB-SubCell"/>
</dbReference>
<dbReference type="GO" id="GO:0030145">
    <property type="term" value="F:manganese ion binding"/>
    <property type="evidence" value="ECO:0007669"/>
    <property type="project" value="UniProtKB-UniRule"/>
</dbReference>
<dbReference type="GO" id="GO:0070006">
    <property type="term" value="F:metalloaminopeptidase activity"/>
    <property type="evidence" value="ECO:0007669"/>
    <property type="project" value="InterPro"/>
</dbReference>
<dbReference type="GO" id="GO:0006508">
    <property type="term" value="P:proteolysis"/>
    <property type="evidence" value="ECO:0007669"/>
    <property type="project" value="UniProtKB-KW"/>
</dbReference>
<dbReference type="CDD" id="cd00433">
    <property type="entry name" value="Peptidase_M17"/>
    <property type="match status" value="1"/>
</dbReference>
<dbReference type="FunFam" id="3.40.220.10:FF:000001">
    <property type="entry name" value="Probable cytosol aminopeptidase"/>
    <property type="match status" value="1"/>
</dbReference>
<dbReference type="FunFam" id="3.40.630.10:FF:000004">
    <property type="entry name" value="Probable cytosol aminopeptidase"/>
    <property type="match status" value="1"/>
</dbReference>
<dbReference type="Gene3D" id="3.40.220.10">
    <property type="entry name" value="Leucine Aminopeptidase, subunit E, domain 1"/>
    <property type="match status" value="1"/>
</dbReference>
<dbReference type="Gene3D" id="3.40.630.10">
    <property type="entry name" value="Zn peptidases"/>
    <property type="match status" value="1"/>
</dbReference>
<dbReference type="HAMAP" id="MF_00181">
    <property type="entry name" value="Cytosol_peptidase_M17"/>
    <property type="match status" value="1"/>
</dbReference>
<dbReference type="InterPro" id="IPR011356">
    <property type="entry name" value="Leucine_aapep/pepB"/>
</dbReference>
<dbReference type="InterPro" id="IPR043472">
    <property type="entry name" value="Macro_dom-like"/>
</dbReference>
<dbReference type="InterPro" id="IPR000819">
    <property type="entry name" value="Peptidase_M17_C"/>
</dbReference>
<dbReference type="InterPro" id="IPR023042">
    <property type="entry name" value="Peptidase_M17_leu_NH2_pept"/>
</dbReference>
<dbReference type="InterPro" id="IPR008283">
    <property type="entry name" value="Peptidase_M17_N"/>
</dbReference>
<dbReference type="NCBIfam" id="NF002072">
    <property type="entry name" value="PRK00913.1-1"/>
    <property type="match status" value="1"/>
</dbReference>
<dbReference type="NCBIfam" id="NF002074">
    <property type="entry name" value="PRK00913.1-4"/>
    <property type="match status" value="1"/>
</dbReference>
<dbReference type="PANTHER" id="PTHR11963:SF23">
    <property type="entry name" value="CYTOSOL AMINOPEPTIDASE"/>
    <property type="match status" value="1"/>
</dbReference>
<dbReference type="PANTHER" id="PTHR11963">
    <property type="entry name" value="LEUCINE AMINOPEPTIDASE-RELATED"/>
    <property type="match status" value="1"/>
</dbReference>
<dbReference type="Pfam" id="PF00883">
    <property type="entry name" value="Peptidase_M17"/>
    <property type="match status" value="1"/>
</dbReference>
<dbReference type="Pfam" id="PF02789">
    <property type="entry name" value="Peptidase_M17_N"/>
    <property type="match status" value="1"/>
</dbReference>
<dbReference type="PRINTS" id="PR00481">
    <property type="entry name" value="LAMNOPPTDASE"/>
</dbReference>
<dbReference type="SUPFAM" id="SSF52949">
    <property type="entry name" value="Macro domain-like"/>
    <property type="match status" value="1"/>
</dbReference>
<dbReference type="SUPFAM" id="SSF53187">
    <property type="entry name" value="Zn-dependent exopeptidases"/>
    <property type="match status" value="1"/>
</dbReference>
<dbReference type="PROSITE" id="PS00631">
    <property type="entry name" value="CYTOSOL_AP"/>
    <property type="match status" value="1"/>
</dbReference>
<keyword id="KW-0031">Aminopeptidase</keyword>
<keyword id="KW-0963">Cytoplasm</keyword>
<keyword id="KW-0378">Hydrolase</keyword>
<keyword id="KW-0464">Manganese</keyword>
<keyword id="KW-0479">Metal-binding</keyword>
<keyword id="KW-0645">Protease</keyword>
<keyword id="KW-1185">Reference proteome</keyword>
<accession>B8F6N9</accession>